<comment type="function">
    <text evidence="1">This protein is involved in control of the biosynthesis of threonine.</text>
</comment>
<comment type="similarity">
    <text evidence="1">Belongs to the thr operon leader peptide family.</text>
</comment>
<name>LPT_SHIF8</name>
<sequence length="21" mass="2138">MKRISTTITTTITITTGNGAG</sequence>
<reference key="1">
    <citation type="journal article" date="2006" name="BMC Genomics">
        <title>Complete genome sequence of Shigella flexneri 5b and comparison with Shigella flexneri 2a.</title>
        <authorList>
            <person name="Nie H."/>
            <person name="Yang F."/>
            <person name="Zhang X."/>
            <person name="Yang J."/>
            <person name="Chen L."/>
            <person name="Wang J."/>
            <person name="Xiong Z."/>
            <person name="Peng J."/>
            <person name="Sun L."/>
            <person name="Dong J."/>
            <person name="Xue Y."/>
            <person name="Xu X."/>
            <person name="Chen S."/>
            <person name="Yao Z."/>
            <person name="Shen Y."/>
            <person name="Jin Q."/>
        </authorList>
    </citation>
    <scope>NUCLEOTIDE SEQUENCE [LARGE SCALE GENOMIC DNA]</scope>
    <source>
        <strain>8401</strain>
    </source>
</reference>
<organism>
    <name type="scientific">Shigella flexneri serotype 5b (strain 8401)</name>
    <dbReference type="NCBI Taxonomy" id="373384"/>
    <lineage>
        <taxon>Bacteria</taxon>
        <taxon>Pseudomonadati</taxon>
        <taxon>Pseudomonadota</taxon>
        <taxon>Gammaproteobacteria</taxon>
        <taxon>Enterobacterales</taxon>
        <taxon>Enterobacteriaceae</taxon>
        <taxon>Shigella</taxon>
    </lineage>
</organism>
<proteinExistence type="inferred from homology"/>
<accession>P0C5Z3</accession>
<feature type="peptide" id="PRO_0000312894" description="thr operon leader peptide">
    <location>
        <begin position="1"/>
        <end position="21"/>
    </location>
</feature>
<protein>
    <recommendedName>
        <fullName evidence="1">thr operon leader peptide</fullName>
    </recommendedName>
    <alternativeName>
        <fullName evidence="1">thr operon attenuator</fullName>
    </alternativeName>
</protein>
<keyword id="KW-0028">Amino-acid biosynthesis</keyword>
<keyword id="KW-0428">Leader peptide</keyword>
<keyword id="KW-0791">Threonine biosynthesis</keyword>
<dbReference type="EMBL" id="CP000266">
    <property type="status" value="NOT_ANNOTATED_CDS"/>
    <property type="molecule type" value="Genomic_DNA"/>
</dbReference>
<dbReference type="RefSeq" id="WP_001386572.1">
    <property type="nucleotide sequence ID" value="NC_008258.1"/>
</dbReference>
<dbReference type="GeneID" id="93777441"/>
<dbReference type="Proteomes" id="UP000000659">
    <property type="component" value="Chromosome"/>
</dbReference>
<dbReference type="GO" id="GO:0009088">
    <property type="term" value="P:threonine biosynthetic process"/>
    <property type="evidence" value="ECO:0007669"/>
    <property type="project" value="UniProtKB-UniRule"/>
</dbReference>
<dbReference type="GO" id="GO:0031556">
    <property type="term" value="P:transcriptional attenuation by ribosome"/>
    <property type="evidence" value="ECO:0007669"/>
    <property type="project" value="UniProtKB-UniRule"/>
</dbReference>
<dbReference type="HAMAP" id="MF_01907">
    <property type="entry name" value="Leader_Thr"/>
    <property type="match status" value="1"/>
</dbReference>
<dbReference type="InterPro" id="IPR011720">
    <property type="entry name" value="Thr_lead_pept"/>
</dbReference>
<dbReference type="NCBIfam" id="NF007329">
    <property type="entry name" value="PRK09816.1"/>
    <property type="match status" value="1"/>
</dbReference>
<dbReference type="NCBIfam" id="TIGR02077">
    <property type="entry name" value="thr_lead_pep"/>
    <property type="match status" value="1"/>
</dbReference>
<dbReference type="Pfam" id="PF08254">
    <property type="entry name" value="Leader_Thr"/>
    <property type="match status" value="1"/>
</dbReference>
<gene>
    <name evidence="1" type="primary">thrL</name>
    <name type="ordered locus">SFV_4436.1</name>
</gene>
<evidence type="ECO:0000255" key="1">
    <source>
        <dbReference type="HAMAP-Rule" id="MF_01907"/>
    </source>
</evidence>